<protein>
    <recommendedName>
        <fullName>Gamma-crystallin-1</fullName>
    </recommendedName>
    <alternativeName>
        <fullName>Gamma-1-CRY</fullName>
    </alternativeName>
    <alternativeName>
        <fullName>Gamma-crystallin I</fullName>
    </alternativeName>
</protein>
<sequence length="175" mass="21749">MGKIFFYEERNFQGRHYECGSDYSDLSSYFNRCNSIRVEGGNWILYEHPSYKGNQYYLWKGEYPDFQRWMGFNDSIRSCRFLPNYQGQYKMRIYERGDYQGQMMEFFDDCPNTYERFNFHDIHSCNVFDGHWMFYEEPNYRGRQYYLRPGEYRRYNDWGASSPRIGSFRRVYHRF</sequence>
<accession>Q06254</accession>
<reference key="1">
    <citation type="journal article" date="1993" name="Gene">
        <title>Characterization of Xenopus laevis gamma-crystallin-encoding genes.</title>
        <authorList>
            <person name="Smolich B.D."/>
            <person name="Tarkington S.K."/>
            <person name="Saha M.S."/>
            <person name="Stathakis D.G."/>
            <person name="Grainger R.M."/>
        </authorList>
    </citation>
    <scope>NUCLEOTIDE SEQUENCE [GENOMIC DNA]</scope>
</reference>
<comment type="function">
    <text>Crystallins are the dominant structural components of the vertebrate eye lens.</text>
</comment>
<comment type="subunit">
    <text evidence="1">Monomer.</text>
</comment>
<comment type="domain">
    <text>Has a two-domain beta-structure, folded into four very similar Greek key motifs.</text>
</comment>
<comment type="similarity">
    <text evidence="3">Belongs to the beta/gamma-crystallin family.</text>
</comment>
<proteinExistence type="inferred from homology"/>
<dbReference type="EMBL" id="M99579">
    <property type="protein sequence ID" value="AAA49693.1"/>
    <property type="molecule type" value="Genomic_DNA"/>
</dbReference>
<dbReference type="PIR" id="JN0680">
    <property type="entry name" value="JN0680"/>
</dbReference>
<dbReference type="RefSeq" id="NP_001165549.1">
    <property type="nucleotide sequence ID" value="NM_001172078.1"/>
</dbReference>
<dbReference type="SMR" id="Q06254"/>
<dbReference type="GeneID" id="100337556"/>
<dbReference type="KEGG" id="xla:100337556"/>
<dbReference type="CTD" id="100337556"/>
<dbReference type="OrthoDB" id="8407241at2759"/>
<dbReference type="Proteomes" id="UP000186698">
    <property type="component" value="Chromosome 1S"/>
</dbReference>
<dbReference type="GO" id="GO:0005212">
    <property type="term" value="F:structural constituent of eye lens"/>
    <property type="evidence" value="ECO:0000318"/>
    <property type="project" value="GO_Central"/>
</dbReference>
<dbReference type="GO" id="GO:0002088">
    <property type="term" value="P:lens development in camera-type eye"/>
    <property type="evidence" value="ECO:0000318"/>
    <property type="project" value="GO_Central"/>
</dbReference>
<dbReference type="GO" id="GO:0007601">
    <property type="term" value="P:visual perception"/>
    <property type="evidence" value="ECO:0000318"/>
    <property type="project" value="GO_Central"/>
</dbReference>
<dbReference type="FunFam" id="2.60.20.10:FF:000001">
    <property type="entry name" value="Crystallin gamma S"/>
    <property type="match status" value="1"/>
</dbReference>
<dbReference type="FunFam" id="2.60.20.10:FF:000003">
    <property type="entry name" value="Crystallin gamma S"/>
    <property type="match status" value="1"/>
</dbReference>
<dbReference type="Gene3D" id="2.60.20.10">
    <property type="entry name" value="Crystallins"/>
    <property type="match status" value="2"/>
</dbReference>
<dbReference type="InterPro" id="IPR050252">
    <property type="entry name" value="Beta/Gamma-Crystallin"/>
</dbReference>
<dbReference type="InterPro" id="IPR001064">
    <property type="entry name" value="Beta/gamma_crystallin"/>
</dbReference>
<dbReference type="InterPro" id="IPR011024">
    <property type="entry name" value="G_crystallin-like"/>
</dbReference>
<dbReference type="PANTHER" id="PTHR11818">
    <property type="entry name" value="BETA/GAMMA CRYSTALLIN"/>
    <property type="match status" value="1"/>
</dbReference>
<dbReference type="PANTHER" id="PTHR11818:SF131">
    <property type="entry name" value="GAMMA-CRYSTALLIN-1"/>
    <property type="match status" value="1"/>
</dbReference>
<dbReference type="Pfam" id="PF00030">
    <property type="entry name" value="Crystall"/>
    <property type="match status" value="2"/>
</dbReference>
<dbReference type="PRINTS" id="PR01367">
    <property type="entry name" value="BGCRYSTALLIN"/>
</dbReference>
<dbReference type="SMART" id="SM00247">
    <property type="entry name" value="XTALbg"/>
    <property type="match status" value="2"/>
</dbReference>
<dbReference type="SUPFAM" id="SSF49695">
    <property type="entry name" value="gamma-Crystallin-like"/>
    <property type="match status" value="1"/>
</dbReference>
<dbReference type="PROSITE" id="PS50915">
    <property type="entry name" value="CRYSTALLIN_BETA_GAMMA"/>
    <property type="match status" value="4"/>
</dbReference>
<name>CRG1_XENLA</name>
<evidence type="ECO:0000250" key="1"/>
<evidence type="ECO:0000255" key="2">
    <source>
        <dbReference type="PROSITE-ProRule" id="PRU00028"/>
    </source>
</evidence>
<evidence type="ECO:0000305" key="3"/>
<gene>
    <name type="primary">cryg1</name>
    <name type="synonym">gcry1</name>
</gene>
<organism>
    <name type="scientific">Xenopus laevis</name>
    <name type="common">African clawed frog</name>
    <dbReference type="NCBI Taxonomy" id="8355"/>
    <lineage>
        <taxon>Eukaryota</taxon>
        <taxon>Metazoa</taxon>
        <taxon>Chordata</taxon>
        <taxon>Craniata</taxon>
        <taxon>Vertebrata</taxon>
        <taxon>Euteleostomi</taxon>
        <taxon>Amphibia</taxon>
        <taxon>Batrachia</taxon>
        <taxon>Anura</taxon>
        <taxon>Pipoidea</taxon>
        <taxon>Pipidae</taxon>
        <taxon>Xenopodinae</taxon>
        <taxon>Xenopus</taxon>
        <taxon>Xenopus</taxon>
    </lineage>
</organism>
<keyword id="KW-0273">Eye lens protein</keyword>
<keyword id="KW-1185">Reference proteome</keyword>
<keyword id="KW-0677">Repeat</keyword>
<feature type="chain" id="PRO_0000057601" description="Gamma-crystallin-1">
    <location>
        <begin position="1"/>
        <end position="175"/>
    </location>
</feature>
<feature type="domain" description="Beta/gamma crystallin 'Greek key' 1" evidence="2">
    <location>
        <begin position="2"/>
        <end position="40"/>
    </location>
</feature>
<feature type="domain" description="Beta/gamma crystallin 'Greek key' 2" evidence="2">
    <location>
        <begin position="41"/>
        <end position="83"/>
    </location>
</feature>
<feature type="domain" description="Beta/gamma crystallin 'Greek key' 3" evidence="2">
    <location>
        <begin position="89"/>
        <end position="129"/>
    </location>
</feature>
<feature type="domain" description="Beta/gamma crystallin 'Greek key' 4" evidence="2">
    <location>
        <begin position="130"/>
        <end position="172"/>
    </location>
</feature>
<feature type="region of interest" description="Connecting peptide">
    <location>
        <begin position="84"/>
        <end position="88"/>
    </location>
</feature>